<sequence>MTATTAPRLKTRYREEIAGKLREEFSYENVMQVPGLVKIVVNMGVGDAARDSKLIDGAVKDLTTITGQKPAVTKARKSIAQFKLREGQPIGCHVTLRGDRMWEFLDRTLSLALPRIRDFRGLSPKQFDGRGNYTFGLTEQVMFHEIDQDKIDRVRGMDITVVTTATNDDEGRALLRHLGFPFKEN</sequence>
<evidence type="ECO:0000255" key="1">
    <source>
        <dbReference type="HAMAP-Rule" id="MF_01333"/>
    </source>
</evidence>
<evidence type="ECO:0000305" key="2"/>
<organism>
    <name type="scientific">Streptomyces griseus subsp. griseus (strain JCM 4626 / CBS 651.72 / NBRC 13350 / KCC S-0626 / ISP 5235)</name>
    <dbReference type="NCBI Taxonomy" id="455632"/>
    <lineage>
        <taxon>Bacteria</taxon>
        <taxon>Bacillati</taxon>
        <taxon>Actinomycetota</taxon>
        <taxon>Actinomycetes</taxon>
        <taxon>Kitasatosporales</taxon>
        <taxon>Streptomycetaceae</taxon>
        <taxon>Streptomyces</taxon>
    </lineage>
</organism>
<proteinExistence type="inferred from homology"/>
<keyword id="KW-0687">Ribonucleoprotein</keyword>
<keyword id="KW-0689">Ribosomal protein</keyword>
<keyword id="KW-0694">RNA-binding</keyword>
<keyword id="KW-0699">rRNA-binding</keyword>
<keyword id="KW-0820">tRNA-binding</keyword>
<accession>B1W3Z5</accession>
<name>RL5_STRGG</name>
<comment type="function">
    <text evidence="1">This is one of the proteins that bind and probably mediate the attachment of the 5S RNA into the large ribosomal subunit, where it forms part of the central protuberance. In the 70S ribosome it contacts protein S13 of the 30S subunit (bridge B1b), connecting the 2 subunits; this bridge is implicated in subunit movement. Contacts the P site tRNA; the 5S rRNA and some of its associated proteins might help stabilize positioning of ribosome-bound tRNAs.</text>
</comment>
<comment type="subunit">
    <text evidence="1">Part of the 50S ribosomal subunit; part of the 5S rRNA/L5/L18/L25 subcomplex. Contacts the 5S rRNA and the P site tRNA. Forms a bridge to the 30S subunit in the 70S ribosome.</text>
</comment>
<comment type="similarity">
    <text evidence="1">Belongs to the universal ribosomal protein uL5 family.</text>
</comment>
<feature type="chain" id="PRO_1000142454" description="Large ribosomal subunit protein uL5">
    <location>
        <begin position="1"/>
        <end position="185"/>
    </location>
</feature>
<gene>
    <name evidence="1" type="primary">rplE</name>
    <name type="ordered locus">SGR_2822</name>
</gene>
<protein>
    <recommendedName>
        <fullName evidence="1">Large ribosomal subunit protein uL5</fullName>
    </recommendedName>
    <alternativeName>
        <fullName evidence="2">50S ribosomal protein L5</fullName>
    </alternativeName>
</protein>
<reference key="1">
    <citation type="journal article" date="2008" name="J. Bacteriol.">
        <title>Genome sequence of the streptomycin-producing microorganism Streptomyces griseus IFO 13350.</title>
        <authorList>
            <person name="Ohnishi Y."/>
            <person name="Ishikawa J."/>
            <person name="Hara H."/>
            <person name="Suzuki H."/>
            <person name="Ikenoya M."/>
            <person name="Ikeda H."/>
            <person name="Yamashita A."/>
            <person name="Hattori M."/>
            <person name="Horinouchi S."/>
        </authorList>
    </citation>
    <scope>NUCLEOTIDE SEQUENCE [LARGE SCALE GENOMIC DNA]</scope>
    <source>
        <strain>JCM 4626 / CBS 651.72 / NBRC 13350 / KCC S-0626 / ISP 5235</strain>
    </source>
</reference>
<dbReference type="EMBL" id="AP009493">
    <property type="protein sequence ID" value="BAG19651.1"/>
    <property type="molecule type" value="Genomic_DNA"/>
</dbReference>
<dbReference type="RefSeq" id="WP_003966948.1">
    <property type="nucleotide sequence ID" value="NC_010572.1"/>
</dbReference>
<dbReference type="SMR" id="B1W3Z5"/>
<dbReference type="GeneID" id="97760382"/>
<dbReference type="KEGG" id="sgr:SGR_2822"/>
<dbReference type="eggNOG" id="COG0094">
    <property type="taxonomic scope" value="Bacteria"/>
</dbReference>
<dbReference type="HOGENOM" id="CLU_061015_2_1_11"/>
<dbReference type="Proteomes" id="UP000001685">
    <property type="component" value="Chromosome"/>
</dbReference>
<dbReference type="GO" id="GO:1990904">
    <property type="term" value="C:ribonucleoprotein complex"/>
    <property type="evidence" value="ECO:0007669"/>
    <property type="project" value="UniProtKB-KW"/>
</dbReference>
<dbReference type="GO" id="GO:0005840">
    <property type="term" value="C:ribosome"/>
    <property type="evidence" value="ECO:0007669"/>
    <property type="project" value="UniProtKB-KW"/>
</dbReference>
<dbReference type="GO" id="GO:0019843">
    <property type="term" value="F:rRNA binding"/>
    <property type="evidence" value="ECO:0007669"/>
    <property type="project" value="UniProtKB-UniRule"/>
</dbReference>
<dbReference type="GO" id="GO:0003735">
    <property type="term" value="F:structural constituent of ribosome"/>
    <property type="evidence" value="ECO:0007669"/>
    <property type="project" value="InterPro"/>
</dbReference>
<dbReference type="GO" id="GO:0000049">
    <property type="term" value="F:tRNA binding"/>
    <property type="evidence" value="ECO:0007669"/>
    <property type="project" value="UniProtKB-UniRule"/>
</dbReference>
<dbReference type="GO" id="GO:0006412">
    <property type="term" value="P:translation"/>
    <property type="evidence" value="ECO:0007669"/>
    <property type="project" value="UniProtKB-UniRule"/>
</dbReference>
<dbReference type="FunFam" id="3.30.1440.10:FF:000001">
    <property type="entry name" value="50S ribosomal protein L5"/>
    <property type="match status" value="1"/>
</dbReference>
<dbReference type="Gene3D" id="3.30.1440.10">
    <property type="match status" value="1"/>
</dbReference>
<dbReference type="HAMAP" id="MF_01333_B">
    <property type="entry name" value="Ribosomal_uL5_B"/>
    <property type="match status" value="1"/>
</dbReference>
<dbReference type="InterPro" id="IPR002132">
    <property type="entry name" value="Ribosomal_uL5"/>
</dbReference>
<dbReference type="InterPro" id="IPR020930">
    <property type="entry name" value="Ribosomal_uL5_bac-type"/>
</dbReference>
<dbReference type="InterPro" id="IPR031309">
    <property type="entry name" value="Ribosomal_uL5_C"/>
</dbReference>
<dbReference type="InterPro" id="IPR020929">
    <property type="entry name" value="Ribosomal_uL5_CS"/>
</dbReference>
<dbReference type="InterPro" id="IPR022803">
    <property type="entry name" value="Ribosomal_uL5_dom_sf"/>
</dbReference>
<dbReference type="InterPro" id="IPR031310">
    <property type="entry name" value="Ribosomal_uL5_N"/>
</dbReference>
<dbReference type="NCBIfam" id="NF000585">
    <property type="entry name" value="PRK00010.1"/>
    <property type="match status" value="1"/>
</dbReference>
<dbReference type="PANTHER" id="PTHR11994">
    <property type="entry name" value="60S RIBOSOMAL PROTEIN L11-RELATED"/>
    <property type="match status" value="1"/>
</dbReference>
<dbReference type="Pfam" id="PF00281">
    <property type="entry name" value="Ribosomal_L5"/>
    <property type="match status" value="1"/>
</dbReference>
<dbReference type="Pfam" id="PF00673">
    <property type="entry name" value="Ribosomal_L5_C"/>
    <property type="match status" value="1"/>
</dbReference>
<dbReference type="PIRSF" id="PIRSF002161">
    <property type="entry name" value="Ribosomal_L5"/>
    <property type="match status" value="1"/>
</dbReference>
<dbReference type="SUPFAM" id="SSF55282">
    <property type="entry name" value="RL5-like"/>
    <property type="match status" value="1"/>
</dbReference>
<dbReference type="PROSITE" id="PS00358">
    <property type="entry name" value="RIBOSOMAL_L5"/>
    <property type="match status" value="1"/>
</dbReference>